<proteinExistence type="inferred from homology"/>
<gene>
    <name evidence="1" type="primary">chdC</name>
    <name type="ordered locus">BC_5388</name>
</gene>
<dbReference type="EC" id="1.3.98.5" evidence="1"/>
<dbReference type="EMBL" id="AE016877">
    <property type="protein sequence ID" value="AAP12250.1"/>
    <property type="molecule type" value="Genomic_DNA"/>
</dbReference>
<dbReference type="RefSeq" id="NP_835049.1">
    <property type="nucleotide sequence ID" value="NC_004722.1"/>
</dbReference>
<dbReference type="SMR" id="Q814N7"/>
<dbReference type="STRING" id="226900.BC_5388"/>
<dbReference type="KEGG" id="bce:BC5388"/>
<dbReference type="PATRIC" id="fig|226900.8.peg.5565"/>
<dbReference type="HOGENOM" id="CLU_063226_1_0_9"/>
<dbReference type="OrthoDB" id="9773646at2"/>
<dbReference type="UniPathway" id="UPA00252"/>
<dbReference type="Proteomes" id="UP000001417">
    <property type="component" value="Chromosome"/>
</dbReference>
<dbReference type="GO" id="GO:0020037">
    <property type="term" value="F:heme binding"/>
    <property type="evidence" value="ECO:0007669"/>
    <property type="project" value="InterPro"/>
</dbReference>
<dbReference type="GO" id="GO:0046872">
    <property type="term" value="F:metal ion binding"/>
    <property type="evidence" value="ECO:0007669"/>
    <property type="project" value="UniProtKB-KW"/>
</dbReference>
<dbReference type="GO" id="GO:0016634">
    <property type="term" value="F:oxidoreductase activity, acting on the CH-CH group of donors, oxygen as acceptor"/>
    <property type="evidence" value="ECO:0007669"/>
    <property type="project" value="UniProtKB-UniRule"/>
</dbReference>
<dbReference type="GO" id="GO:0004601">
    <property type="term" value="F:peroxidase activity"/>
    <property type="evidence" value="ECO:0007669"/>
    <property type="project" value="InterPro"/>
</dbReference>
<dbReference type="GO" id="GO:0006785">
    <property type="term" value="P:heme B biosynthetic process"/>
    <property type="evidence" value="ECO:0007669"/>
    <property type="project" value="UniProtKB-UniRule"/>
</dbReference>
<dbReference type="Gene3D" id="3.30.70.1030">
    <property type="entry name" value="Apc35880, domain 1"/>
    <property type="match status" value="2"/>
</dbReference>
<dbReference type="HAMAP" id="MF_01442">
    <property type="entry name" value="Coproheme_decarbox_1"/>
    <property type="match status" value="1"/>
</dbReference>
<dbReference type="InterPro" id="IPR031332">
    <property type="entry name" value="CHDC"/>
</dbReference>
<dbReference type="InterPro" id="IPR010644">
    <property type="entry name" value="ChdC/CLD"/>
</dbReference>
<dbReference type="InterPro" id="IPR011008">
    <property type="entry name" value="Dimeric_a/b-barrel"/>
</dbReference>
<dbReference type="NCBIfam" id="NF008913">
    <property type="entry name" value="PRK12276.1"/>
    <property type="match status" value="1"/>
</dbReference>
<dbReference type="PANTHER" id="PTHR36843:SF1">
    <property type="entry name" value="COPROHEME DECARBOXYLASE"/>
    <property type="match status" value="1"/>
</dbReference>
<dbReference type="PANTHER" id="PTHR36843">
    <property type="entry name" value="HEME-DEPENDENT PEROXIDASE YWFI-RELATED"/>
    <property type="match status" value="1"/>
</dbReference>
<dbReference type="Pfam" id="PF06778">
    <property type="entry name" value="Chlor_dismutase"/>
    <property type="match status" value="1"/>
</dbReference>
<dbReference type="SUPFAM" id="SSF54909">
    <property type="entry name" value="Dimeric alpha+beta barrel"/>
    <property type="match status" value="1"/>
</dbReference>
<accession>Q814N7</accession>
<evidence type="ECO:0000255" key="1">
    <source>
        <dbReference type="HAMAP-Rule" id="MF_01442"/>
    </source>
</evidence>
<protein>
    <recommendedName>
        <fullName evidence="1">Coproheme decarboxylase</fullName>
        <ecNumber evidence="1">1.3.98.5</ecNumber>
    </recommendedName>
    <alternativeName>
        <fullName evidence="1">Coproheme III oxidative decarboxylase</fullName>
    </alternativeName>
    <alternativeName>
        <fullName evidence="1">Hydrogen peroxide-dependent heme synthase</fullName>
    </alternativeName>
</protein>
<name>CHDC_BACCR</name>
<reference key="1">
    <citation type="journal article" date="2003" name="Nature">
        <title>Genome sequence of Bacillus cereus and comparative analysis with Bacillus anthracis.</title>
        <authorList>
            <person name="Ivanova N."/>
            <person name="Sorokin A."/>
            <person name="Anderson I."/>
            <person name="Galleron N."/>
            <person name="Candelon B."/>
            <person name="Kapatral V."/>
            <person name="Bhattacharyya A."/>
            <person name="Reznik G."/>
            <person name="Mikhailova N."/>
            <person name="Lapidus A."/>
            <person name="Chu L."/>
            <person name="Mazur M."/>
            <person name="Goltsman E."/>
            <person name="Larsen N."/>
            <person name="D'Souza M."/>
            <person name="Walunas T."/>
            <person name="Grechkin Y."/>
            <person name="Pusch G."/>
            <person name="Haselkorn R."/>
            <person name="Fonstein M."/>
            <person name="Ehrlich S.D."/>
            <person name="Overbeek R."/>
            <person name="Kyrpides N.C."/>
        </authorList>
    </citation>
    <scope>NUCLEOTIDE SEQUENCE [LARGE SCALE GENOMIC DNA]</scope>
    <source>
        <strain>ATCC 14579 / DSM 31 / CCUG 7414 / JCM 2152 / NBRC 15305 / NCIMB 9373 / NCTC 2599 / NRRL B-3711</strain>
    </source>
</reference>
<keyword id="KW-0349">Heme</keyword>
<keyword id="KW-0350">Heme biosynthesis</keyword>
<keyword id="KW-0408">Iron</keyword>
<keyword id="KW-0479">Metal-binding</keyword>
<keyword id="KW-0560">Oxidoreductase</keyword>
<keyword id="KW-1185">Reference proteome</keyword>
<comment type="function">
    <text evidence="1">Involved in coproporphyrin-dependent heme b biosynthesis. Catalyzes the decarboxylation of Fe-coproporphyrin III (coproheme) to heme b (protoheme IX), the last step of the pathway. The reaction occurs in a stepwise manner with a three-propionate intermediate.</text>
</comment>
<comment type="catalytic activity">
    <reaction evidence="1">
        <text>Fe-coproporphyrin III + 2 H2O2 + 2 H(+) = heme b + 2 CO2 + 4 H2O</text>
        <dbReference type="Rhea" id="RHEA:56516"/>
        <dbReference type="ChEBI" id="CHEBI:15377"/>
        <dbReference type="ChEBI" id="CHEBI:15378"/>
        <dbReference type="ChEBI" id="CHEBI:16240"/>
        <dbReference type="ChEBI" id="CHEBI:16526"/>
        <dbReference type="ChEBI" id="CHEBI:60344"/>
        <dbReference type="ChEBI" id="CHEBI:68438"/>
        <dbReference type="EC" id="1.3.98.5"/>
    </reaction>
    <physiologicalReaction direction="left-to-right" evidence="1">
        <dbReference type="Rhea" id="RHEA:56517"/>
    </physiologicalReaction>
</comment>
<comment type="catalytic activity">
    <reaction evidence="1">
        <text>Fe-coproporphyrin III + H2O2 + H(+) = harderoheme III + CO2 + 2 H2O</text>
        <dbReference type="Rhea" id="RHEA:57940"/>
        <dbReference type="ChEBI" id="CHEBI:15377"/>
        <dbReference type="ChEBI" id="CHEBI:15378"/>
        <dbReference type="ChEBI" id="CHEBI:16240"/>
        <dbReference type="ChEBI" id="CHEBI:16526"/>
        <dbReference type="ChEBI" id="CHEBI:68438"/>
        <dbReference type="ChEBI" id="CHEBI:142463"/>
    </reaction>
    <physiologicalReaction direction="left-to-right" evidence="1">
        <dbReference type="Rhea" id="RHEA:57941"/>
    </physiologicalReaction>
</comment>
<comment type="catalytic activity">
    <reaction evidence="1">
        <text>harderoheme III + H2O2 + H(+) = heme b + CO2 + 2 H2O</text>
        <dbReference type="Rhea" id="RHEA:57944"/>
        <dbReference type="ChEBI" id="CHEBI:15377"/>
        <dbReference type="ChEBI" id="CHEBI:15378"/>
        <dbReference type="ChEBI" id="CHEBI:16240"/>
        <dbReference type="ChEBI" id="CHEBI:16526"/>
        <dbReference type="ChEBI" id="CHEBI:60344"/>
        <dbReference type="ChEBI" id="CHEBI:142463"/>
    </reaction>
    <physiologicalReaction direction="left-to-right" evidence="1">
        <dbReference type="Rhea" id="RHEA:57945"/>
    </physiologicalReaction>
</comment>
<comment type="cofactor">
    <cofactor evidence="1">
        <name>Fe-coproporphyrin III</name>
        <dbReference type="ChEBI" id="CHEBI:68438"/>
    </cofactor>
    <text evidence="1">Fe-coproporphyrin III acts both as a substrate and a redox cofactor.</text>
</comment>
<comment type="pathway">
    <text evidence="1">Porphyrin-containing compound metabolism; protoheme biosynthesis.</text>
</comment>
<comment type="similarity">
    <text evidence="1">Belongs to the ChdC family. Type 1 subfamily.</text>
</comment>
<sequence length="247" mass="28696">MSEATTTLDGWYCLHDLRSIDWAAWKTLSSDERGQAVSEFLNVVEKWNEVATAKKGSHAMYTVVGQKADIMLMILRPTMEELNEIETELNKTTLAEYMVPAYSYVSVVELSNYLPADEDPYQNPQILARLYPELPKANHICFYPMDKRRQGDDNWYMLPMEERKKMMYSHSKIGRQYAGKVRQVISGSVGFDDFEWGVTLFADDVLQFKKLIYEMRFDEVSARYGEFGTFFVGNILPDEKVEKFLHI</sequence>
<organism>
    <name type="scientific">Bacillus cereus (strain ATCC 14579 / DSM 31 / CCUG 7414 / JCM 2152 / NBRC 15305 / NCIMB 9373 / NCTC 2599 / NRRL B-3711)</name>
    <dbReference type="NCBI Taxonomy" id="226900"/>
    <lineage>
        <taxon>Bacteria</taxon>
        <taxon>Bacillati</taxon>
        <taxon>Bacillota</taxon>
        <taxon>Bacilli</taxon>
        <taxon>Bacillales</taxon>
        <taxon>Bacillaceae</taxon>
        <taxon>Bacillus</taxon>
        <taxon>Bacillus cereus group</taxon>
    </lineage>
</organism>
<feature type="chain" id="PRO_0000294032" description="Coproheme decarboxylase">
    <location>
        <begin position="1"/>
        <end position="247"/>
    </location>
</feature>
<feature type="active site" evidence="1">
    <location>
        <position position="143"/>
    </location>
</feature>
<feature type="binding site" evidence="1">
    <location>
        <position position="129"/>
    </location>
    <ligand>
        <name>Fe-coproporphyrin III</name>
        <dbReference type="ChEBI" id="CHEBI:68438"/>
    </ligand>
</feature>
<feature type="binding site" evidence="1">
    <location>
        <begin position="143"/>
        <end position="147"/>
    </location>
    <ligand>
        <name>Fe-coproporphyrin III</name>
        <dbReference type="ChEBI" id="CHEBI:68438"/>
    </ligand>
</feature>
<feature type="binding site" description="axial binding residue" evidence="1">
    <location>
        <position position="170"/>
    </location>
    <ligand>
        <name>Fe-coproporphyrin III</name>
        <dbReference type="ChEBI" id="CHEBI:68438"/>
    </ligand>
    <ligandPart>
        <name>Fe</name>
        <dbReference type="ChEBI" id="CHEBI:18248"/>
    </ligandPart>
</feature>
<feature type="binding site" evidence="1">
    <location>
        <position position="183"/>
    </location>
    <ligand>
        <name>Fe-coproporphyrin III</name>
        <dbReference type="ChEBI" id="CHEBI:68438"/>
    </ligand>
</feature>
<feature type="binding site" evidence="1">
    <location>
        <position position="221"/>
    </location>
    <ligand>
        <name>Fe-coproporphyrin III</name>
        <dbReference type="ChEBI" id="CHEBI:68438"/>
    </ligand>
</feature>